<organism>
    <name type="scientific">Stutzerimonas stutzeri (strain A1501)</name>
    <name type="common">Pseudomonas stutzeri</name>
    <dbReference type="NCBI Taxonomy" id="379731"/>
    <lineage>
        <taxon>Bacteria</taxon>
        <taxon>Pseudomonadati</taxon>
        <taxon>Pseudomonadota</taxon>
        <taxon>Gammaproteobacteria</taxon>
        <taxon>Pseudomonadales</taxon>
        <taxon>Pseudomonadaceae</taxon>
        <taxon>Stutzerimonas</taxon>
    </lineage>
</organism>
<name>RUVA_STUS1</name>
<gene>
    <name evidence="1" type="primary">ruvA</name>
    <name type="ordered locus">PST_2809</name>
</gene>
<evidence type="ECO:0000255" key="1">
    <source>
        <dbReference type="HAMAP-Rule" id="MF_00031"/>
    </source>
</evidence>
<feature type="chain" id="PRO_1000002520" description="Holliday junction branch migration complex subunit RuvA">
    <location>
        <begin position="1"/>
        <end position="201"/>
    </location>
</feature>
<feature type="region of interest" description="Domain I" evidence="1">
    <location>
        <begin position="1"/>
        <end position="64"/>
    </location>
</feature>
<feature type="region of interest" description="Domain II" evidence="1">
    <location>
        <begin position="65"/>
        <end position="143"/>
    </location>
</feature>
<feature type="region of interest" description="Flexible linker" evidence="1">
    <location>
        <begin position="144"/>
        <end position="152"/>
    </location>
</feature>
<feature type="region of interest" description="Domain III" evidence="1">
    <location>
        <begin position="153"/>
        <end position="201"/>
    </location>
</feature>
<accession>A4VNA4</accession>
<proteinExistence type="inferred from homology"/>
<reference key="1">
    <citation type="journal article" date="2008" name="Proc. Natl. Acad. Sci. U.S.A.">
        <title>Nitrogen fixation island and rhizosphere competence traits in the genome of root-associated Pseudomonas stutzeri A1501.</title>
        <authorList>
            <person name="Yan Y."/>
            <person name="Yang J."/>
            <person name="Dou Y."/>
            <person name="Chen M."/>
            <person name="Ping S."/>
            <person name="Peng J."/>
            <person name="Lu W."/>
            <person name="Zhang W."/>
            <person name="Yao Z."/>
            <person name="Li H."/>
            <person name="Liu W."/>
            <person name="He S."/>
            <person name="Geng L."/>
            <person name="Zhang X."/>
            <person name="Yang F."/>
            <person name="Yu H."/>
            <person name="Zhan Y."/>
            <person name="Li D."/>
            <person name="Lin Z."/>
            <person name="Wang Y."/>
            <person name="Elmerich C."/>
            <person name="Lin M."/>
            <person name="Jin Q."/>
        </authorList>
    </citation>
    <scope>NUCLEOTIDE SEQUENCE [LARGE SCALE GENOMIC DNA]</scope>
    <source>
        <strain>A1501</strain>
    </source>
</reference>
<sequence>MIGRLRGTLAEKQPPHMILDVNGIGYEVEVPMTTLYRLPAVGEPVTLHTHLVVREDAQLLYGFAEKRERELFRELIRLNGVGPKLALALMSGLEVDELVRCVQAQDTSVLVRIPGVGKKTAERLLVELKDRFKAWESMPAIATLVVEPGSKTAVTSAENDAVSALISLGFKPQEASRAVSAIQEENLSSEEMIRRALKGMV</sequence>
<protein>
    <recommendedName>
        <fullName evidence="1">Holliday junction branch migration complex subunit RuvA</fullName>
    </recommendedName>
</protein>
<comment type="function">
    <text evidence="1">The RuvA-RuvB-RuvC complex processes Holliday junction (HJ) DNA during genetic recombination and DNA repair, while the RuvA-RuvB complex plays an important role in the rescue of blocked DNA replication forks via replication fork reversal (RFR). RuvA specifically binds to HJ cruciform DNA, conferring on it an open structure. The RuvB hexamer acts as an ATP-dependent pump, pulling dsDNA into and through the RuvAB complex. HJ branch migration allows RuvC to scan DNA until it finds its consensus sequence, where it cleaves and resolves the cruciform DNA.</text>
</comment>
<comment type="subunit">
    <text evidence="1">Homotetramer. Forms an RuvA(8)-RuvB(12)-Holliday junction (HJ) complex. HJ DNA is sandwiched between 2 RuvA tetramers; dsDNA enters through RuvA and exits via RuvB. An RuvB hexamer assembles on each DNA strand where it exits the tetramer. Each RuvB hexamer is contacted by two RuvA subunits (via domain III) on 2 adjacent RuvB subunits; this complex drives branch migration. In the full resolvosome a probable DNA-RuvA(4)-RuvB(12)-RuvC(2) complex forms which resolves the HJ.</text>
</comment>
<comment type="subcellular location">
    <subcellularLocation>
        <location evidence="1">Cytoplasm</location>
    </subcellularLocation>
</comment>
<comment type="domain">
    <text evidence="1">Has three domains with a flexible linker between the domains II and III and assumes an 'L' shape. Domain III is highly mobile and contacts RuvB.</text>
</comment>
<comment type="similarity">
    <text evidence="1">Belongs to the RuvA family.</text>
</comment>
<keyword id="KW-0963">Cytoplasm</keyword>
<keyword id="KW-0227">DNA damage</keyword>
<keyword id="KW-0233">DNA recombination</keyword>
<keyword id="KW-0234">DNA repair</keyword>
<keyword id="KW-0238">DNA-binding</keyword>
<keyword id="KW-1185">Reference proteome</keyword>
<dbReference type="EMBL" id="CP000304">
    <property type="protein sequence ID" value="ABP80455.1"/>
    <property type="molecule type" value="Genomic_DNA"/>
</dbReference>
<dbReference type="RefSeq" id="WP_011913912.1">
    <property type="nucleotide sequence ID" value="NC_009434.1"/>
</dbReference>
<dbReference type="SMR" id="A4VNA4"/>
<dbReference type="GeneID" id="66822131"/>
<dbReference type="KEGG" id="psa:PST_2809"/>
<dbReference type="eggNOG" id="COG0632">
    <property type="taxonomic scope" value="Bacteria"/>
</dbReference>
<dbReference type="HOGENOM" id="CLU_087936_0_0_6"/>
<dbReference type="Proteomes" id="UP000000233">
    <property type="component" value="Chromosome"/>
</dbReference>
<dbReference type="GO" id="GO:0005737">
    <property type="term" value="C:cytoplasm"/>
    <property type="evidence" value="ECO:0007669"/>
    <property type="project" value="UniProtKB-SubCell"/>
</dbReference>
<dbReference type="GO" id="GO:0009379">
    <property type="term" value="C:Holliday junction helicase complex"/>
    <property type="evidence" value="ECO:0007669"/>
    <property type="project" value="InterPro"/>
</dbReference>
<dbReference type="GO" id="GO:0048476">
    <property type="term" value="C:Holliday junction resolvase complex"/>
    <property type="evidence" value="ECO:0007669"/>
    <property type="project" value="UniProtKB-UniRule"/>
</dbReference>
<dbReference type="GO" id="GO:0005524">
    <property type="term" value="F:ATP binding"/>
    <property type="evidence" value="ECO:0007669"/>
    <property type="project" value="InterPro"/>
</dbReference>
<dbReference type="GO" id="GO:0000400">
    <property type="term" value="F:four-way junction DNA binding"/>
    <property type="evidence" value="ECO:0007669"/>
    <property type="project" value="UniProtKB-UniRule"/>
</dbReference>
<dbReference type="GO" id="GO:0009378">
    <property type="term" value="F:four-way junction helicase activity"/>
    <property type="evidence" value="ECO:0007669"/>
    <property type="project" value="InterPro"/>
</dbReference>
<dbReference type="GO" id="GO:0006310">
    <property type="term" value="P:DNA recombination"/>
    <property type="evidence" value="ECO:0007669"/>
    <property type="project" value="UniProtKB-UniRule"/>
</dbReference>
<dbReference type="GO" id="GO:0006281">
    <property type="term" value="P:DNA repair"/>
    <property type="evidence" value="ECO:0007669"/>
    <property type="project" value="UniProtKB-UniRule"/>
</dbReference>
<dbReference type="CDD" id="cd14332">
    <property type="entry name" value="UBA_RuvA_C"/>
    <property type="match status" value="1"/>
</dbReference>
<dbReference type="Gene3D" id="1.10.150.20">
    <property type="entry name" value="5' to 3' exonuclease, C-terminal subdomain"/>
    <property type="match status" value="1"/>
</dbReference>
<dbReference type="Gene3D" id="1.10.8.10">
    <property type="entry name" value="DNA helicase RuvA subunit, C-terminal domain"/>
    <property type="match status" value="1"/>
</dbReference>
<dbReference type="Gene3D" id="2.40.50.140">
    <property type="entry name" value="Nucleic acid-binding proteins"/>
    <property type="match status" value="1"/>
</dbReference>
<dbReference type="HAMAP" id="MF_00031">
    <property type="entry name" value="DNA_HJ_migration_RuvA"/>
    <property type="match status" value="1"/>
</dbReference>
<dbReference type="InterPro" id="IPR013849">
    <property type="entry name" value="DNA_helicase_Holl-junc_RuvA_I"/>
</dbReference>
<dbReference type="InterPro" id="IPR003583">
    <property type="entry name" value="Hlx-hairpin-Hlx_DNA-bd_motif"/>
</dbReference>
<dbReference type="InterPro" id="IPR012340">
    <property type="entry name" value="NA-bd_OB-fold"/>
</dbReference>
<dbReference type="InterPro" id="IPR000085">
    <property type="entry name" value="RuvA"/>
</dbReference>
<dbReference type="InterPro" id="IPR010994">
    <property type="entry name" value="RuvA_2-like"/>
</dbReference>
<dbReference type="InterPro" id="IPR011114">
    <property type="entry name" value="RuvA_C"/>
</dbReference>
<dbReference type="InterPro" id="IPR036267">
    <property type="entry name" value="RuvA_C_sf"/>
</dbReference>
<dbReference type="NCBIfam" id="TIGR00084">
    <property type="entry name" value="ruvA"/>
    <property type="match status" value="1"/>
</dbReference>
<dbReference type="Pfam" id="PF14520">
    <property type="entry name" value="HHH_5"/>
    <property type="match status" value="1"/>
</dbReference>
<dbReference type="Pfam" id="PF07499">
    <property type="entry name" value="RuvA_C"/>
    <property type="match status" value="1"/>
</dbReference>
<dbReference type="Pfam" id="PF01330">
    <property type="entry name" value="RuvA_N"/>
    <property type="match status" value="1"/>
</dbReference>
<dbReference type="SMART" id="SM00278">
    <property type="entry name" value="HhH1"/>
    <property type="match status" value="2"/>
</dbReference>
<dbReference type="SUPFAM" id="SSF46929">
    <property type="entry name" value="DNA helicase RuvA subunit, C-terminal domain"/>
    <property type="match status" value="1"/>
</dbReference>
<dbReference type="SUPFAM" id="SSF50249">
    <property type="entry name" value="Nucleic acid-binding proteins"/>
    <property type="match status" value="1"/>
</dbReference>
<dbReference type="SUPFAM" id="SSF47781">
    <property type="entry name" value="RuvA domain 2-like"/>
    <property type="match status" value="1"/>
</dbReference>